<name>GLPE_SALPB</name>
<proteinExistence type="inferred from homology"/>
<organism>
    <name type="scientific">Salmonella paratyphi B (strain ATCC BAA-1250 / SPB7)</name>
    <dbReference type="NCBI Taxonomy" id="1016998"/>
    <lineage>
        <taxon>Bacteria</taxon>
        <taxon>Pseudomonadati</taxon>
        <taxon>Pseudomonadota</taxon>
        <taxon>Gammaproteobacteria</taxon>
        <taxon>Enterobacterales</taxon>
        <taxon>Enterobacteriaceae</taxon>
        <taxon>Salmonella</taxon>
    </lineage>
</organism>
<gene>
    <name evidence="1" type="primary">glpE</name>
    <name type="ordered locus">SPAB_04380</name>
</gene>
<evidence type="ECO:0000255" key="1">
    <source>
        <dbReference type="HAMAP-Rule" id="MF_01009"/>
    </source>
</evidence>
<reference key="1">
    <citation type="submission" date="2007-11" db="EMBL/GenBank/DDBJ databases">
        <authorList>
            <consortium name="The Salmonella enterica serovar Paratyphi B Genome Sequencing Project"/>
            <person name="McClelland M."/>
            <person name="Sanderson E.K."/>
            <person name="Porwollik S."/>
            <person name="Spieth J."/>
            <person name="Clifton W.S."/>
            <person name="Fulton R."/>
            <person name="Cordes M."/>
            <person name="Wollam A."/>
            <person name="Shah N."/>
            <person name="Pepin K."/>
            <person name="Bhonagiri V."/>
            <person name="Nash W."/>
            <person name="Johnson M."/>
            <person name="Thiruvilangam P."/>
            <person name="Wilson R."/>
        </authorList>
    </citation>
    <scope>NUCLEOTIDE SEQUENCE [LARGE SCALE GENOMIC DNA]</scope>
    <source>
        <strain>ATCC BAA-1250 / SPB7</strain>
    </source>
</reference>
<protein>
    <recommendedName>
        <fullName evidence="1">Thiosulfate sulfurtransferase GlpE</fullName>
        <ecNumber evidence="1">2.8.1.1</ecNumber>
    </recommendedName>
</protein>
<comment type="function">
    <text evidence="1">Transferase that catalyzes the transfer of sulfur from thiosulfate to thiophilic acceptors such as cyanide or dithiols. May function in a CysM-independent thiosulfate assimilation pathway by catalyzing the conversion of thiosulfate to sulfite, which can then be used for L-cysteine biosynthesis.</text>
</comment>
<comment type="catalytic activity">
    <reaction evidence="1">
        <text>thiosulfate + hydrogen cyanide = thiocyanate + sulfite + 2 H(+)</text>
        <dbReference type="Rhea" id="RHEA:16881"/>
        <dbReference type="ChEBI" id="CHEBI:15378"/>
        <dbReference type="ChEBI" id="CHEBI:17359"/>
        <dbReference type="ChEBI" id="CHEBI:18022"/>
        <dbReference type="ChEBI" id="CHEBI:18407"/>
        <dbReference type="ChEBI" id="CHEBI:33542"/>
        <dbReference type="EC" id="2.8.1.1"/>
    </reaction>
</comment>
<comment type="catalytic activity">
    <reaction evidence="1">
        <text>thiosulfate + [thioredoxin]-dithiol = [thioredoxin]-disulfide + hydrogen sulfide + sulfite + 2 H(+)</text>
        <dbReference type="Rhea" id="RHEA:83859"/>
        <dbReference type="Rhea" id="RHEA-COMP:10698"/>
        <dbReference type="Rhea" id="RHEA-COMP:10700"/>
        <dbReference type="ChEBI" id="CHEBI:15378"/>
        <dbReference type="ChEBI" id="CHEBI:17359"/>
        <dbReference type="ChEBI" id="CHEBI:29919"/>
        <dbReference type="ChEBI" id="CHEBI:29950"/>
        <dbReference type="ChEBI" id="CHEBI:33542"/>
        <dbReference type="ChEBI" id="CHEBI:50058"/>
    </reaction>
</comment>
<comment type="subcellular location">
    <subcellularLocation>
        <location evidence="1">Cytoplasm</location>
    </subcellularLocation>
</comment>
<comment type="similarity">
    <text evidence="1">Belongs to the GlpE family.</text>
</comment>
<feature type="chain" id="PRO_1000084032" description="Thiosulfate sulfurtransferase GlpE">
    <location>
        <begin position="1"/>
        <end position="108"/>
    </location>
</feature>
<feature type="domain" description="Rhodanese" evidence="1">
    <location>
        <begin position="17"/>
        <end position="105"/>
    </location>
</feature>
<feature type="active site" description="Cysteine persulfide intermediate" evidence="1">
    <location>
        <position position="65"/>
    </location>
</feature>
<dbReference type="EC" id="2.8.1.1" evidence="1"/>
<dbReference type="EMBL" id="CP000886">
    <property type="protein sequence ID" value="ABX69696.1"/>
    <property type="molecule type" value="Genomic_DNA"/>
</dbReference>
<dbReference type="RefSeq" id="WP_000434523.1">
    <property type="nucleotide sequence ID" value="NC_010102.1"/>
</dbReference>
<dbReference type="SMR" id="A9MTU1"/>
<dbReference type="KEGG" id="spq:SPAB_04380"/>
<dbReference type="PATRIC" id="fig|1016998.12.peg.4123"/>
<dbReference type="HOGENOM" id="CLU_089574_14_0_6"/>
<dbReference type="BioCyc" id="SENT1016998:SPAB_RS17820-MONOMER"/>
<dbReference type="Proteomes" id="UP000008556">
    <property type="component" value="Chromosome"/>
</dbReference>
<dbReference type="GO" id="GO:0005737">
    <property type="term" value="C:cytoplasm"/>
    <property type="evidence" value="ECO:0007669"/>
    <property type="project" value="UniProtKB-SubCell"/>
</dbReference>
<dbReference type="GO" id="GO:0004792">
    <property type="term" value="F:thiosulfate-cyanide sulfurtransferase activity"/>
    <property type="evidence" value="ECO:0007669"/>
    <property type="project" value="UniProtKB-UniRule"/>
</dbReference>
<dbReference type="GO" id="GO:0006071">
    <property type="term" value="P:glycerol metabolic process"/>
    <property type="evidence" value="ECO:0007669"/>
    <property type="project" value="UniProtKB-UniRule"/>
</dbReference>
<dbReference type="CDD" id="cd01444">
    <property type="entry name" value="GlpE_ST"/>
    <property type="match status" value="1"/>
</dbReference>
<dbReference type="FunFam" id="3.40.250.10:FF:000007">
    <property type="entry name" value="Thiosulfate sulfurtransferase GlpE"/>
    <property type="match status" value="1"/>
</dbReference>
<dbReference type="Gene3D" id="3.40.250.10">
    <property type="entry name" value="Rhodanese-like domain"/>
    <property type="match status" value="1"/>
</dbReference>
<dbReference type="HAMAP" id="MF_01009">
    <property type="entry name" value="Thiosulf_sulfurtr"/>
    <property type="match status" value="1"/>
</dbReference>
<dbReference type="InterPro" id="IPR050229">
    <property type="entry name" value="GlpE_sulfurtransferase"/>
</dbReference>
<dbReference type="InterPro" id="IPR001763">
    <property type="entry name" value="Rhodanese-like_dom"/>
</dbReference>
<dbReference type="InterPro" id="IPR036873">
    <property type="entry name" value="Rhodanese-like_dom_sf"/>
</dbReference>
<dbReference type="InterPro" id="IPR023695">
    <property type="entry name" value="Thiosulf_sulfurTrfase"/>
</dbReference>
<dbReference type="NCBIfam" id="NF001195">
    <property type="entry name" value="PRK00162.1"/>
    <property type="match status" value="1"/>
</dbReference>
<dbReference type="PANTHER" id="PTHR43031">
    <property type="entry name" value="FAD-DEPENDENT OXIDOREDUCTASE"/>
    <property type="match status" value="1"/>
</dbReference>
<dbReference type="PANTHER" id="PTHR43031:SF6">
    <property type="entry name" value="THIOSULFATE SULFURTRANSFERASE GLPE"/>
    <property type="match status" value="1"/>
</dbReference>
<dbReference type="Pfam" id="PF00581">
    <property type="entry name" value="Rhodanese"/>
    <property type="match status" value="1"/>
</dbReference>
<dbReference type="SMART" id="SM00450">
    <property type="entry name" value="RHOD"/>
    <property type="match status" value="1"/>
</dbReference>
<dbReference type="SUPFAM" id="SSF52821">
    <property type="entry name" value="Rhodanese/Cell cycle control phosphatase"/>
    <property type="match status" value="1"/>
</dbReference>
<dbReference type="PROSITE" id="PS50206">
    <property type="entry name" value="RHODANESE_3"/>
    <property type="match status" value="1"/>
</dbReference>
<keyword id="KW-0963">Cytoplasm</keyword>
<keyword id="KW-0808">Transferase</keyword>
<sequence length="108" mass="11973">MEQFECITVEEAYQKLHQGAAVLVDIRDPQSYAMGHAPQAFHLTNDTLGAFMREHGFDTAVMVMCYHGNSSKGAAQYLLQQGYDAVYSIDGGFEAWHRRFPADVANGA</sequence>
<accession>A9MTU1</accession>